<protein>
    <recommendedName>
        <fullName>Transmembrane protein 120 homolog</fullName>
    </recommendedName>
</protein>
<reference evidence="4" key="1">
    <citation type="journal article" date="2000" name="Science">
        <title>The genome sequence of Drosophila melanogaster.</title>
        <authorList>
            <person name="Adams M.D."/>
            <person name="Celniker S.E."/>
            <person name="Holt R.A."/>
            <person name="Evans C.A."/>
            <person name="Gocayne J.D."/>
            <person name="Amanatides P.G."/>
            <person name="Scherer S.E."/>
            <person name="Li P.W."/>
            <person name="Hoskins R.A."/>
            <person name="Galle R.F."/>
            <person name="George R.A."/>
            <person name="Lewis S.E."/>
            <person name="Richards S."/>
            <person name="Ashburner M."/>
            <person name="Henderson S.N."/>
            <person name="Sutton G.G."/>
            <person name="Wortman J.R."/>
            <person name="Yandell M.D."/>
            <person name="Zhang Q."/>
            <person name="Chen L.X."/>
            <person name="Brandon R.C."/>
            <person name="Rogers Y.-H.C."/>
            <person name="Blazej R.G."/>
            <person name="Champe M."/>
            <person name="Pfeiffer B.D."/>
            <person name="Wan K.H."/>
            <person name="Doyle C."/>
            <person name="Baxter E.G."/>
            <person name="Helt G."/>
            <person name="Nelson C.R."/>
            <person name="Miklos G.L.G."/>
            <person name="Abril J.F."/>
            <person name="Agbayani A."/>
            <person name="An H.-J."/>
            <person name="Andrews-Pfannkoch C."/>
            <person name="Baldwin D."/>
            <person name="Ballew R.M."/>
            <person name="Basu A."/>
            <person name="Baxendale J."/>
            <person name="Bayraktaroglu L."/>
            <person name="Beasley E.M."/>
            <person name="Beeson K.Y."/>
            <person name="Benos P.V."/>
            <person name="Berman B.P."/>
            <person name="Bhandari D."/>
            <person name="Bolshakov S."/>
            <person name="Borkova D."/>
            <person name="Botchan M.R."/>
            <person name="Bouck J."/>
            <person name="Brokstein P."/>
            <person name="Brottier P."/>
            <person name="Burtis K.C."/>
            <person name="Busam D.A."/>
            <person name="Butler H."/>
            <person name="Cadieu E."/>
            <person name="Center A."/>
            <person name="Chandra I."/>
            <person name="Cherry J.M."/>
            <person name="Cawley S."/>
            <person name="Dahlke C."/>
            <person name="Davenport L.B."/>
            <person name="Davies P."/>
            <person name="de Pablos B."/>
            <person name="Delcher A."/>
            <person name="Deng Z."/>
            <person name="Mays A.D."/>
            <person name="Dew I."/>
            <person name="Dietz S.M."/>
            <person name="Dodson K."/>
            <person name="Doup L.E."/>
            <person name="Downes M."/>
            <person name="Dugan-Rocha S."/>
            <person name="Dunkov B.C."/>
            <person name="Dunn P."/>
            <person name="Durbin K.J."/>
            <person name="Evangelista C.C."/>
            <person name="Ferraz C."/>
            <person name="Ferriera S."/>
            <person name="Fleischmann W."/>
            <person name="Fosler C."/>
            <person name="Gabrielian A.E."/>
            <person name="Garg N.S."/>
            <person name="Gelbart W.M."/>
            <person name="Glasser K."/>
            <person name="Glodek A."/>
            <person name="Gong F."/>
            <person name="Gorrell J.H."/>
            <person name="Gu Z."/>
            <person name="Guan P."/>
            <person name="Harris M."/>
            <person name="Harris N.L."/>
            <person name="Harvey D.A."/>
            <person name="Heiman T.J."/>
            <person name="Hernandez J.R."/>
            <person name="Houck J."/>
            <person name="Hostin D."/>
            <person name="Houston K.A."/>
            <person name="Howland T.J."/>
            <person name="Wei M.-H."/>
            <person name="Ibegwam C."/>
            <person name="Jalali M."/>
            <person name="Kalush F."/>
            <person name="Karpen G.H."/>
            <person name="Ke Z."/>
            <person name="Kennison J.A."/>
            <person name="Ketchum K.A."/>
            <person name="Kimmel B.E."/>
            <person name="Kodira C.D."/>
            <person name="Kraft C.L."/>
            <person name="Kravitz S."/>
            <person name="Kulp D."/>
            <person name="Lai Z."/>
            <person name="Lasko P."/>
            <person name="Lei Y."/>
            <person name="Levitsky A.A."/>
            <person name="Li J.H."/>
            <person name="Li Z."/>
            <person name="Liang Y."/>
            <person name="Lin X."/>
            <person name="Liu X."/>
            <person name="Mattei B."/>
            <person name="McIntosh T.C."/>
            <person name="McLeod M.P."/>
            <person name="McPherson D."/>
            <person name="Merkulov G."/>
            <person name="Milshina N.V."/>
            <person name="Mobarry C."/>
            <person name="Morris J."/>
            <person name="Moshrefi A."/>
            <person name="Mount S.M."/>
            <person name="Moy M."/>
            <person name="Murphy B."/>
            <person name="Murphy L."/>
            <person name="Muzny D.M."/>
            <person name="Nelson D.L."/>
            <person name="Nelson D.R."/>
            <person name="Nelson K.A."/>
            <person name="Nixon K."/>
            <person name="Nusskern D.R."/>
            <person name="Pacleb J.M."/>
            <person name="Palazzolo M."/>
            <person name="Pittman G.S."/>
            <person name="Pan S."/>
            <person name="Pollard J."/>
            <person name="Puri V."/>
            <person name="Reese M.G."/>
            <person name="Reinert K."/>
            <person name="Remington K."/>
            <person name="Saunders R.D.C."/>
            <person name="Scheeler F."/>
            <person name="Shen H."/>
            <person name="Shue B.C."/>
            <person name="Siden-Kiamos I."/>
            <person name="Simpson M."/>
            <person name="Skupski M.P."/>
            <person name="Smith T.J."/>
            <person name="Spier E."/>
            <person name="Spradling A.C."/>
            <person name="Stapleton M."/>
            <person name="Strong R."/>
            <person name="Sun E."/>
            <person name="Svirskas R."/>
            <person name="Tector C."/>
            <person name="Turner R."/>
            <person name="Venter E."/>
            <person name="Wang A.H."/>
            <person name="Wang X."/>
            <person name="Wang Z.-Y."/>
            <person name="Wassarman D.A."/>
            <person name="Weinstock G.M."/>
            <person name="Weissenbach J."/>
            <person name="Williams S.M."/>
            <person name="Woodage T."/>
            <person name="Worley K.C."/>
            <person name="Wu D."/>
            <person name="Yang S."/>
            <person name="Yao Q.A."/>
            <person name="Ye J."/>
            <person name="Yeh R.-F."/>
            <person name="Zaveri J.S."/>
            <person name="Zhan M."/>
            <person name="Zhang G."/>
            <person name="Zhao Q."/>
            <person name="Zheng L."/>
            <person name="Zheng X.H."/>
            <person name="Zhong F.N."/>
            <person name="Zhong W."/>
            <person name="Zhou X."/>
            <person name="Zhu S.C."/>
            <person name="Zhu X."/>
            <person name="Smith H.O."/>
            <person name="Gibbs R.A."/>
            <person name="Myers E.W."/>
            <person name="Rubin G.M."/>
            <person name="Venter J.C."/>
        </authorList>
    </citation>
    <scope>NUCLEOTIDE SEQUENCE [LARGE SCALE GENOMIC DNA]</scope>
    <source>
        <strain>Berkeley</strain>
    </source>
</reference>
<reference key="2">
    <citation type="journal article" date="2002" name="Genome Biol.">
        <title>Annotation of the Drosophila melanogaster euchromatic genome: a systematic review.</title>
        <authorList>
            <person name="Misra S."/>
            <person name="Crosby M.A."/>
            <person name="Mungall C.J."/>
            <person name="Matthews B.B."/>
            <person name="Campbell K.S."/>
            <person name="Hradecky P."/>
            <person name="Huang Y."/>
            <person name="Kaminker J.S."/>
            <person name="Millburn G.H."/>
            <person name="Prochnik S.E."/>
            <person name="Smith C.D."/>
            <person name="Tupy J.L."/>
            <person name="Whitfield E.J."/>
            <person name="Bayraktaroglu L."/>
            <person name="Berman B.P."/>
            <person name="Bettencourt B.R."/>
            <person name="Celniker S.E."/>
            <person name="de Grey A.D.N.J."/>
            <person name="Drysdale R.A."/>
            <person name="Harris N.L."/>
            <person name="Richter J."/>
            <person name="Russo S."/>
            <person name="Schroeder A.J."/>
            <person name="Shu S.Q."/>
            <person name="Stapleton M."/>
            <person name="Yamada C."/>
            <person name="Ashburner M."/>
            <person name="Gelbart W.M."/>
            <person name="Rubin G.M."/>
            <person name="Lewis S.E."/>
        </authorList>
    </citation>
    <scope>GENOME REANNOTATION</scope>
    <source>
        <strain>Berkeley</strain>
    </source>
</reference>
<reference evidence="4" key="3">
    <citation type="journal article" date="2000" name="Science">
        <title>From sequence to chromosome: the tip of the X chromosome of D. melanogaster.</title>
        <authorList>
            <person name="Benos P.V."/>
            <person name="Gatt M.K."/>
            <person name="Ashburner M."/>
            <person name="Murphy L."/>
            <person name="Harris D."/>
            <person name="Barrell B.G."/>
            <person name="Ferraz C."/>
            <person name="Vidal S."/>
            <person name="Brun C."/>
            <person name="Demailles J."/>
            <person name="Cadieu E."/>
            <person name="Dreano S."/>
            <person name="Gloux S."/>
            <person name="Lelaure V."/>
            <person name="Mottier S."/>
            <person name="Galibert F."/>
            <person name="Borkova D."/>
            <person name="Minana B."/>
            <person name="Kafatos F.C."/>
            <person name="Louis C."/>
            <person name="Siden-Kiamos I."/>
            <person name="Bolshakov S."/>
            <person name="Papagiannakis G."/>
            <person name="Spanos L."/>
            <person name="Cox S."/>
            <person name="Madueno E."/>
            <person name="de Pablos B."/>
            <person name="Modolell J."/>
            <person name="Peter A."/>
            <person name="Schoettler P."/>
            <person name="Werner M."/>
            <person name="Mourkioti F."/>
            <person name="Beinert N."/>
            <person name="Dowe G."/>
            <person name="Schaefer U."/>
            <person name="Jaeckle H."/>
            <person name="Bucheton A."/>
            <person name="Callister D.M."/>
            <person name="Campbell L.A."/>
            <person name="Darlamitsou A."/>
            <person name="Henderson N.S."/>
            <person name="McMillan P.J."/>
            <person name="Salles C."/>
            <person name="Tait E.A."/>
            <person name="Valenti P."/>
            <person name="Saunders R.D.C."/>
            <person name="Glover D.M."/>
        </authorList>
    </citation>
    <scope>NUCLEOTIDE SEQUENCE [LARGE SCALE GENOMIC DNA]</scope>
    <source>
        <strain>Oregon-R</strain>
    </source>
</reference>
<reference key="4">
    <citation type="journal article" date="2002" name="Genome Biol.">
        <title>A Drosophila full-length cDNA resource.</title>
        <authorList>
            <person name="Stapleton M."/>
            <person name="Carlson J.W."/>
            <person name="Brokstein P."/>
            <person name="Yu C."/>
            <person name="Champe M."/>
            <person name="George R.A."/>
            <person name="Guarin H."/>
            <person name="Kronmiller B."/>
            <person name="Pacleb J.M."/>
            <person name="Park S."/>
            <person name="Wan K.H."/>
            <person name="Rubin G.M."/>
            <person name="Celniker S.E."/>
        </authorList>
    </citation>
    <scope>NUCLEOTIDE SEQUENCE [LARGE SCALE MRNA] OF 144-387</scope>
    <source>
        <strain>Berkeley</strain>
        <tissue>Head</tissue>
    </source>
</reference>
<reference key="5">
    <citation type="journal article" date="2008" name="J. Proteome Res.">
        <title>Phosphoproteome analysis of Drosophila melanogaster embryos.</title>
        <authorList>
            <person name="Zhai B."/>
            <person name="Villen J."/>
            <person name="Beausoleil S.A."/>
            <person name="Mintseris J."/>
            <person name="Gygi S.P."/>
        </authorList>
    </citation>
    <scope>PHOSPHORYLATION [LARGE SCALE ANALYSIS] AT SER-352; SER-354 AND SER-365</scope>
    <scope>IDENTIFICATION BY MASS SPECTROMETRY</scope>
    <source>
        <tissue>Embryo</tissue>
    </source>
</reference>
<proteinExistence type="evidence at protein level"/>
<sequence length="387" mass="45487">MNIDSLKNEWEELNKEFAELESCNRRYIELLEQLHSHQQICFNEIKHQRYRMNQITTSLRQFKGPVPAEDKEKVDDLHKMTLKRKAQLHEIEQSLPAKSGRYLQIILGDVNVSILNRNDKVRYKDDYEKFKLILNVIGLIMAFFNLIFNYRALELAFIFLLVWYYCTLTIRESILKVNGSRIKGWWRAHHFISTVAAGVLLVWPQGEHWQIFRMQFMYFNVYISIVQYLQFGYQKGLLYRLKALGERHNMDITIEGFHSWMWRGLSFLLPFLFIGYGYQAYNAWTLYKLAYSPPDAPWHVSVMSGLFLLLFVGNMATTLWVVPEKIRERAKERYRLQSMGKSMKLRKEMKNSASDLDLSSGSKLSPTATTTTSIATATQTPAEKKET</sequence>
<feature type="chain" id="PRO_0000174338" description="Transmembrane protein 120 homolog">
    <location>
        <begin position="1"/>
        <end position="387"/>
    </location>
</feature>
<feature type="transmembrane region" description="Helical" evidence="1">
    <location>
        <begin position="130"/>
        <end position="150"/>
    </location>
</feature>
<feature type="transmembrane region" description="Helical" evidence="1">
    <location>
        <begin position="155"/>
        <end position="175"/>
    </location>
</feature>
<feature type="transmembrane region" description="Helical" evidence="1">
    <location>
        <begin position="191"/>
        <end position="211"/>
    </location>
</feature>
<feature type="transmembrane region" description="Helical" evidence="1">
    <location>
        <begin position="216"/>
        <end position="238"/>
    </location>
</feature>
<feature type="transmembrane region" description="Helical" evidence="1">
    <location>
        <begin position="264"/>
        <end position="284"/>
    </location>
</feature>
<feature type="transmembrane region" description="Helical" evidence="1">
    <location>
        <begin position="302"/>
        <end position="322"/>
    </location>
</feature>
<feature type="region of interest" description="Disordered" evidence="2">
    <location>
        <begin position="346"/>
        <end position="387"/>
    </location>
</feature>
<feature type="coiled-coil region" evidence="1">
    <location>
        <begin position="1"/>
        <end position="39"/>
    </location>
</feature>
<feature type="compositionally biased region" description="Low complexity" evidence="2">
    <location>
        <begin position="352"/>
        <end position="381"/>
    </location>
</feature>
<feature type="modified residue" description="Phosphoserine" evidence="3">
    <location>
        <position position="352"/>
    </location>
</feature>
<feature type="modified residue" description="Phosphoserine" evidence="3">
    <location>
        <position position="354"/>
    </location>
</feature>
<feature type="modified residue" description="Phosphoserine" evidence="3">
    <location>
        <position position="365"/>
    </location>
</feature>
<feature type="glycosylation site" description="N-linked (GlcNAc...) asparagine" evidence="1">
    <location>
        <position position="111"/>
    </location>
</feature>
<dbReference type="EMBL" id="AE014298">
    <property type="protein sequence ID" value="AAF45825.2"/>
    <property type="molecule type" value="Genomic_DNA"/>
</dbReference>
<dbReference type="EMBL" id="AL133506">
    <property type="protein sequence ID" value="CAB65846.1"/>
    <property type="molecule type" value="Genomic_DNA"/>
</dbReference>
<dbReference type="EMBL" id="AY118486">
    <property type="protein sequence ID" value="AAM49855.1"/>
    <property type="status" value="ALT_INIT"/>
    <property type="molecule type" value="mRNA"/>
</dbReference>
<dbReference type="RefSeq" id="NP_001245509.1">
    <property type="nucleotide sequence ID" value="NM_001258580.1"/>
</dbReference>
<dbReference type="RefSeq" id="NP_001284834.1">
    <property type="nucleotide sequence ID" value="NM_001297905.1"/>
</dbReference>
<dbReference type="RefSeq" id="NP_570029.1">
    <property type="nucleotide sequence ID" value="NM_130673.4"/>
</dbReference>
<dbReference type="RefSeq" id="NP_726830.1">
    <property type="nucleotide sequence ID" value="NM_166952.1"/>
</dbReference>
<dbReference type="RefSeq" id="NP_996340.1">
    <property type="nucleotide sequence ID" value="NM_206617.2"/>
</dbReference>
<dbReference type="SMR" id="Q9U1M2"/>
<dbReference type="BioGRID" id="57801">
    <property type="interactions" value="2"/>
</dbReference>
<dbReference type="DIP" id="DIP-19791N"/>
<dbReference type="FunCoup" id="Q9U1M2">
    <property type="interactions" value="164"/>
</dbReference>
<dbReference type="IntAct" id="Q9U1M2">
    <property type="interactions" value="2"/>
</dbReference>
<dbReference type="STRING" id="7227.FBpp0301615"/>
<dbReference type="GlyGen" id="Q9U1M2">
    <property type="glycosylation" value="1 site"/>
</dbReference>
<dbReference type="iPTMnet" id="Q9U1M2"/>
<dbReference type="PaxDb" id="7227-FBpp0301615"/>
<dbReference type="EnsemblMetazoa" id="FBtr0070491">
    <property type="protein sequence ID" value="FBpp0070469"/>
    <property type="gene ID" value="FBgn0040384"/>
</dbReference>
<dbReference type="EnsemblMetazoa" id="FBtr0070492">
    <property type="protein sequence ID" value="FBpp0070470"/>
    <property type="gene ID" value="FBgn0040384"/>
</dbReference>
<dbReference type="EnsemblMetazoa" id="FBtr0070493">
    <property type="protein sequence ID" value="FBpp0089092"/>
    <property type="gene ID" value="FBgn0040384"/>
</dbReference>
<dbReference type="EnsemblMetazoa" id="FBtr0309881">
    <property type="protein sequence ID" value="FBpp0301615"/>
    <property type="gene ID" value="FBgn0040384"/>
</dbReference>
<dbReference type="EnsemblMetazoa" id="FBtr0345318">
    <property type="protein sequence ID" value="FBpp0311478"/>
    <property type="gene ID" value="FBgn0040384"/>
</dbReference>
<dbReference type="GeneID" id="31270"/>
<dbReference type="KEGG" id="dme:Dmel_CG32795"/>
<dbReference type="UCSC" id="CG32795-RA">
    <property type="organism name" value="d. melanogaster"/>
</dbReference>
<dbReference type="AGR" id="FB:FBgn0040384"/>
<dbReference type="FlyBase" id="FBgn0040384">
    <property type="gene designation" value="CG32795"/>
</dbReference>
<dbReference type="VEuPathDB" id="VectorBase:FBgn0040384"/>
<dbReference type="eggNOG" id="KOG4758">
    <property type="taxonomic scope" value="Eukaryota"/>
</dbReference>
<dbReference type="GeneTree" id="ENSGT00390000007848"/>
<dbReference type="HOGENOM" id="CLU_048749_1_1_1"/>
<dbReference type="InParanoid" id="Q9U1M2"/>
<dbReference type="OMA" id="WPNTGPW"/>
<dbReference type="OrthoDB" id="2015098at2759"/>
<dbReference type="PhylomeDB" id="Q9U1M2"/>
<dbReference type="BioGRID-ORCS" id="31270">
    <property type="hits" value="0 hits in 3 CRISPR screens"/>
</dbReference>
<dbReference type="GenomeRNAi" id="31270"/>
<dbReference type="PRO" id="PR:Q9U1M2"/>
<dbReference type="Proteomes" id="UP000000803">
    <property type="component" value="Chromosome X"/>
</dbReference>
<dbReference type="Bgee" id="FBgn0040384">
    <property type="expression patterns" value="Expressed in fat body cell in Malpighian tubule and 216 other cell types or tissues"/>
</dbReference>
<dbReference type="ExpressionAtlas" id="Q9U1M2">
    <property type="expression patterns" value="baseline and differential"/>
</dbReference>
<dbReference type="GO" id="GO:0016020">
    <property type="term" value="C:membrane"/>
    <property type="evidence" value="ECO:0000318"/>
    <property type="project" value="GO_Central"/>
</dbReference>
<dbReference type="GO" id="GO:0050829">
    <property type="term" value="P:defense response to Gram-negative bacterium"/>
    <property type="evidence" value="ECO:0007001"/>
    <property type="project" value="FlyBase"/>
</dbReference>
<dbReference type="GO" id="GO:0045089">
    <property type="term" value="P:positive regulation of innate immune response"/>
    <property type="evidence" value="ECO:0007001"/>
    <property type="project" value="FlyBase"/>
</dbReference>
<dbReference type="InterPro" id="IPR012926">
    <property type="entry name" value="TMEM120A/B"/>
</dbReference>
<dbReference type="PANTHER" id="PTHR21433:SF0">
    <property type="entry name" value="TRANSMEMBRANE PROTEIN 120 HOMOLOG"/>
    <property type="match status" value="1"/>
</dbReference>
<dbReference type="PANTHER" id="PTHR21433">
    <property type="entry name" value="TRANSMEMBRANE PROTEIN INDUCED BY TUMOR NECROSIS FACTOR ALPHA"/>
    <property type="match status" value="1"/>
</dbReference>
<dbReference type="Pfam" id="PF07851">
    <property type="entry name" value="TMEM120A-B"/>
    <property type="match status" value="1"/>
</dbReference>
<accession>Q9U1M2</accession>
<accession>Q0KHW4</accession>
<accession>Q9W4V5</accession>
<accession>Q9W4V6</accession>
<comment type="subcellular location">
    <subcellularLocation>
        <location evidence="4">Membrane</location>
        <topology evidence="4">Multi-pass membrane protein</topology>
    </subcellularLocation>
</comment>
<comment type="similarity">
    <text evidence="4">Belongs to the TMEM120 family.</text>
</comment>
<comment type="sequence caution" evidence="4">
    <conflict type="erroneous initiation">
        <sequence resource="EMBL-CDS" id="AAM49855"/>
    </conflict>
</comment>
<name>TM120_DROME</name>
<organism>
    <name type="scientific">Drosophila melanogaster</name>
    <name type="common">Fruit fly</name>
    <dbReference type="NCBI Taxonomy" id="7227"/>
    <lineage>
        <taxon>Eukaryota</taxon>
        <taxon>Metazoa</taxon>
        <taxon>Ecdysozoa</taxon>
        <taxon>Arthropoda</taxon>
        <taxon>Hexapoda</taxon>
        <taxon>Insecta</taxon>
        <taxon>Pterygota</taxon>
        <taxon>Neoptera</taxon>
        <taxon>Endopterygota</taxon>
        <taxon>Diptera</taxon>
        <taxon>Brachycera</taxon>
        <taxon>Muscomorpha</taxon>
        <taxon>Ephydroidea</taxon>
        <taxon>Drosophilidae</taxon>
        <taxon>Drosophila</taxon>
        <taxon>Sophophora</taxon>
    </lineage>
</organism>
<gene>
    <name type="ORF">CG32795</name>
</gene>
<evidence type="ECO:0000255" key="1"/>
<evidence type="ECO:0000256" key="2">
    <source>
        <dbReference type="SAM" id="MobiDB-lite"/>
    </source>
</evidence>
<evidence type="ECO:0000269" key="3">
    <source>
    </source>
</evidence>
<evidence type="ECO:0000305" key="4"/>
<keyword id="KW-0175">Coiled coil</keyword>
<keyword id="KW-0325">Glycoprotein</keyword>
<keyword id="KW-0472">Membrane</keyword>
<keyword id="KW-0597">Phosphoprotein</keyword>
<keyword id="KW-1185">Reference proteome</keyword>
<keyword id="KW-0812">Transmembrane</keyword>
<keyword id="KW-1133">Transmembrane helix</keyword>